<organism>
    <name type="scientific">Schizosaccharomyces pombe (strain 972 / ATCC 24843)</name>
    <name type="common">Fission yeast</name>
    <dbReference type="NCBI Taxonomy" id="284812"/>
    <lineage>
        <taxon>Eukaryota</taxon>
        <taxon>Fungi</taxon>
        <taxon>Dikarya</taxon>
        <taxon>Ascomycota</taxon>
        <taxon>Taphrinomycotina</taxon>
        <taxon>Schizosaccharomycetes</taxon>
        <taxon>Schizosaccharomycetales</taxon>
        <taxon>Schizosaccharomycetaceae</taxon>
        <taxon>Schizosaccharomyces</taxon>
    </lineage>
</organism>
<dbReference type="EMBL" id="CU329671">
    <property type="protein sequence ID" value="CAB10084.1"/>
    <property type="molecule type" value="Genomic_DNA"/>
</dbReference>
<dbReference type="PIR" id="T40210">
    <property type="entry name" value="T40210"/>
</dbReference>
<dbReference type="RefSeq" id="NP_596569.1">
    <property type="nucleotide sequence ID" value="NM_001022490.2"/>
</dbReference>
<dbReference type="SMR" id="P87308"/>
<dbReference type="BioGRID" id="276857">
    <property type="interactions" value="37"/>
</dbReference>
<dbReference type="FunCoup" id="P87308">
    <property type="interactions" value="21"/>
</dbReference>
<dbReference type="STRING" id="284812.P87308"/>
<dbReference type="iPTMnet" id="P87308"/>
<dbReference type="PaxDb" id="4896-SPBC31F10.07.1"/>
<dbReference type="EnsemblFungi" id="SPBC31F10.07.1">
    <property type="protein sequence ID" value="SPBC31F10.07.1:pep"/>
    <property type="gene ID" value="SPBC31F10.07"/>
</dbReference>
<dbReference type="GeneID" id="2540327"/>
<dbReference type="KEGG" id="spo:2540327"/>
<dbReference type="PomBase" id="SPBC31F10.07">
    <property type="gene designation" value="lsb5"/>
</dbReference>
<dbReference type="VEuPathDB" id="FungiDB:SPBC31F10.07"/>
<dbReference type="eggNOG" id="KOG1087">
    <property type="taxonomic scope" value="Eukaryota"/>
</dbReference>
<dbReference type="HOGENOM" id="CLU_036827_2_0_1"/>
<dbReference type="InParanoid" id="P87308"/>
<dbReference type="OMA" id="QPEPAMI"/>
<dbReference type="PhylomeDB" id="P87308"/>
<dbReference type="PRO" id="PR:P87308"/>
<dbReference type="Proteomes" id="UP000002485">
    <property type="component" value="Chromosome II"/>
</dbReference>
<dbReference type="GO" id="GO:0030479">
    <property type="term" value="C:actin cortical patch"/>
    <property type="evidence" value="ECO:0000318"/>
    <property type="project" value="GO_Central"/>
</dbReference>
<dbReference type="GO" id="GO:0005938">
    <property type="term" value="C:cell cortex"/>
    <property type="evidence" value="ECO:0007005"/>
    <property type="project" value="PomBase"/>
</dbReference>
<dbReference type="GO" id="GO:0044732">
    <property type="term" value="C:mitotic spindle pole body"/>
    <property type="evidence" value="ECO:0007005"/>
    <property type="project" value="PomBase"/>
</dbReference>
<dbReference type="GO" id="GO:0035091">
    <property type="term" value="F:phosphatidylinositol binding"/>
    <property type="evidence" value="ECO:0007669"/>
    <property type="project" value="InterPro"/>
</dbReference>
<dbReference type="GO" id="GO:0043130">
    <property type="term" value="F:ubiquitin binding"/>
    <property type="evidence" value="ECO:0007669"/>
    <property type="project" value="InterPro"/>
</dbReference>
<dbReference type="GO" id="GO:0051666">
    <property type="term" value="P:actin cortical patch localization"/>
    <property type="evidence" value="ECO:0000318"/>
    <property type="project" value="GO_Central"/>
</dbReference>
<dbReference type="GO" id="GO:0030036">
    <property type="term" value="P:actin cytoskeleton organization"/>
    <property type="evidence" value="ECO:0000266"/>
    <property type="project" value="PomBase"/>
</dbReference>
<dbReference type="GO" id="GO:0007015">
    <property type="term" value="P:actin filament organization"/>
    <property type="evidence" value="ECO:0000318"/>
    <property type="project" value="GO_Central"/>
</dbReference>
<dbReference type="GO" id="GO:0006897">
    <property type="term" value="P:endocytosis"/>
    <property type="evidence" value="ECO:0000318"/>
    <property type="project" value="GO_Central"/>
</dbReference>
<dbReference type="GO" id="GO:0006886">
    <property type="term" value="P:intracellular protein transport"/>
    <property type="evidence" value="ECO:0007669"/>
    <property type="project" value="UniProtKB-ARBA"/>
</dbReference>
<dbReference type="GO" id="GO:0007034">
    <property type="term" value="P:vacuolar transport"/>
    <property type="evidence" value="ECO:0007669"/>
    <property type="project" value="UniProtKB-ARBA"/>
</dbReference>
<dbReference type="CDD" id="cd14232">
    <property type="entry name" value="GAT_LSB5"/>
    <property type="match status" value="1"/>
</dbReference>
<dbReference type="CDD" id="cd16980">
    <property type="entry name" value="VHS_Lsb5"/>
    <property type="match status" value="1"/>
</dbReference>
<dbReference type="Gene3D" id="1.20.58.160">
    <property type="match status" value="1"/>
</dbReference>
<dbReference type="Gene3D" id="1.25.40.90">
    <property type="match status" value="1"/>
</dbReference>
<dbReference type="InterPro" id="IPR008942">
    <property type="entry name" value="ENTH_VHS"/>
</dbReference>
<dbReference type="InterPro" id="IPR044103">
    <property type="entry name" value="GAT_LSB5"/>
</dbReference>
<dbReference type="InterPro" id="IPR038425">
    <property type="entry name" value="GAT_sf"/>
</dbReference>
<dbReference type="InterPro" id="IPR045007">
    <property type="entry name" value="LSB5"/>
</dbReference>
<dbReference type="InterPro" id="IPR002014">
    <property type="entry name" value="VHS_dom"/>
</dbReference>
<dbReference type="PANTHER" id="PTHR47789">
    <property type="entry name" value="LAS SEVENTEEN-BINDING PROTEIN 5"/>
    <property type="match status" value="1"/>
</dbReference>
<dbReference type="PANTHER" id="PTHR47789:SF1">
    <property type="entry name" value="LAS SEVENTEEN-BINDING PROTEIN 5"/>
    <property type="match status" value="1"/>
</dbReference>
<dbReference type="Pfam" id="PF00790">
    <property type="entry name" value="VHS"/>
    <property type="match status" value="1"/>
</dbReference>
<dbReference type="SMART" id="SM00288">
    <property type="entry name" value="VHS"/>
    <property type="match status" value="1"/>
</dbReference>
<dbReference type="SUPFAM" id="SSF48464">
    <property type="entry name" value="ENTH/VHS domain"/>
    <property type="match status" value="1"/>
</dbReference>
<dbReference type="SUPFAM" id="SSF89009">
    <property type="entry name" value="GAT-like domain"/>
    <property type="match status" value="1"/>
</dbReference>
<dbReference type="PROSITE" id="PS50179">
    <property type="entry name" value="VHS"/>
    <property type="match status" value="1"/>
</dbReference>
<keyword id="KW-0963">Cytoplasm</keyword>
<keyword id="KW-0206">Cytoskeleton</keyword>
<keyword id="KW-0254">Endocytosis</keyword>
<keyword id="KW-1185">Reference proteome</keyword>
<feature type="chain" id="PRO_0000315965" description="Protein lsb5">
    <location>
        <begin position="1"/>
        <end position="304"/>
    </location>
</feature>
<feature type="domain" description="VHS" evidence="2">
    <location>
        <begin position="20"/>
        <end position="149"/>
    </location>
</feature>
<feature type="region of interest" description="Disordered" evidence="3">
    <location>
        <begin position="274"/>
        <end position="304"/>
    </location>
</feature>
<feature type="compositionally biased region" description="Low complexity" evidence="3">
    <location>
        <begin position="274"/>
        <end position="286"/>
    </location>
</feature>
<evidence type="ECO:0000250" key="1"/>
<evidence type="ECO:0000255" key="2">
    <source>
        <dbReference type="PROSITE-ProRule" id="PRU00218"/>
    </source>
</evidence>
<evidence type="ECO:0000256" key="3">
    <source>
        <dbReference type="SAM" id="MobiDB-lite"/>
    </source>
</evidence>
<evidence type="ECO:0000269" key="4">
    <source>
    </source>
</evidence>
<evidence type="ECO:0000305" key="5"/>
<comment type="function">
    <text evidence="1">Essential for the organization of the actin cytoskeleton, fluid phase endocytosis and vesicle trafficking.</text>
</comment>
<comment type="subcellular location">
    <subcellularLocation>
        <location evidence="4">Cytoplasm</location>
        <location evidence="4">Cell cortex</location>
    </subcellularLocation>
    <subcellularLocation>
        <location evidence="4">Cytoplasm</location>
        <location evidence="4">Cytoskeleton</location>
    </subcellularLocation>
</comment>
<comment type="similarity">
    <text evidence="5">Belongs to the LSB5 family.</text>
</comment>
<gene>
    <name type="primary">lsb5</name>
    <name type="ORF">SPBC31F10.07</name>
</gene>
<proteinExistence type="inferred from homology"/>
<protein>
    <recommendedName>
        <fullName>Protein lsb5</fullName>
    </recommendedName>
</protein>
<name>LSB5_SCHPO</name>
<reference key="1">
    <citation type="journal article" date="2002" name="Nature">
        <title>The genome sequence of Schizosaccharomyces pombe.</title>
        <authorList>
            <person name="Wood V."/>
            <person name="Gwilliam R."/>
            <person name="Rajandream M.A."/>
            <person name="Lyne M.H."/>
            <person name="Lyne R."/>
            <person name="Stewart A."/>
            <person name="Sgouros J.G."/>
            <person name="Peat N."/>
            <person name="Hayles J."/>
            <person name="Baker S.G."/>
            <person name="Basham D."/>
            <person name="Bowman S."/>
            <person name="Brooks K."/>
            <person name="Brown D."/>
            <person name="Brown S."/>
            <person name="Chillingworth T."/>
            <person name="Churcher C.M."/>
            <person name="Collins M."/>
            <person name="Connor R."/>
            <person name="Cronin A."/>
            <person name="Davis P."/>
            <person name="Feltwell T."/>
            <person name="Fraser A."/>
            <person name="Gentles S."/>
            <person name="Goble A."/>
            <person name="Hamlin N."/>
            <person name="Harris D.E."/>
            <person name="Hidalgo J."/>
            <person name="Hodgson G."/>
            <person name="Holroyd S."/>
            <person name="Hornsby T."/>
            <person name="Howarth S."/>
            <person name="Huckle E.J."/>
            <person name="Hunt S."/>
            <person name="Jagels K."/>
            <person name="James K.D."/>
            <person name="Jones L."/>
            <person name="Jones M."/>
            <person name="Leather S."/>
            <person name="McDonald S."/>
            <person name="McLean J."/>
            <person name="Mooney P."/>
            <person name="Moule S."/>
            <person name="Mungall K.L."/>
            <person name="Murphy L.D."/>
            <person name="Niblett D."/>
            <person name="Odell C."/>
            <person name="Oliver K."/>
            <person name="O'Neil S."/>
            <person name="Pearson D."/>
            <person name="Quail M.A."/>
            <person name="Rabbinowitsch E."/>
            <person name="Rutherford K.M."/>
            <person name="Rutter S."/>
            <person name="Saunders D."/>
            <person name="Seeger K."/>
            <person name="Sharp S."/>
            <person name="Skelton J."/>
            <person name="Simmonds M.N."/>
            <person name="Squares R."/>
            <person name="Squares S."/>
            <person name="Stevens K."/>
            <person name="Taylor K."/>
            <person name="Taylor R.G."/>
            <person name="Tivey A."/>
            <person name="Walsh S.V."/>
            <person name="Warren T."/>
            <person name="Whitehead S."/>
            <person name="Woodward J.R."/>
            <person name="Volckaert G."/>
            <person name="Aert R."/>
            <person name="Robben J."/>
            <person name="Grymonprez B."/>
            <person name="Weltjens I."/>
            <person name="Vanstreels E."/>
            <person name="Rieger M."/>
            <person name="Schaefer M."/>
            <person name="Mueller-Auer S."/>
            <person name="Gabel C."/>
            <person name="Fuchs M."/>
            <person name="Duesterhoeft A."/>
            <person name="Fritzc C."/>
            <person name="Holzer E."/>
            <person name="Moestl D."/>
            <person name="Hilbert H."/>
            <person name="Borzym K."/>
            <person name="Langer I."/>
            <person name="Beck A."/>
            <person name="Lehrach H."/>
            <person name="Reinhardt R."/>
            <person name="Pohl T.M."/>
            <person name="Eger P."/>
            <person name="Zimmermann W."/>
            <person name="Wedler H."/>
            <person name="Wambutt R."/>
            <person name="Purnelle B."/>
            <person name="Goffeau A."/>
            <person name="Cadieu E."/>
            <person name="Dreano S."/>
            <person name="Gloux S."/>
            <person name="Lelaure V."/>
            <person name="Mottier S."/>
            <person name="Galibert F."/>
            <person name="Aves S.J."/>
            <person name="Xiang Z."/>
            <person name="Hunt C."/>
            <person name="Moore K."/>
            <person name="Hurst S.M."/>
            <person name="Lucas M."/>
            <person name="Rochet M."/>
            <person name="Gaillardin C."/>
            <person name="Tallada V.A."/>
            <person name="Garzon A."/>
            <person name="Thode G."/>
            <person name="Daga R.R."/>
            <person name="Cruzado L."/>
            <person name="Jimenez J."/>
            <person name="Sanchez M."/>
            <person name="del Rey F."/>
            <person name="Benito J."/>
            <person name="Dominguez A."/>
            <person name="Revuelta J.L."/>
            <person name="Moreno S."/>
            <person name="Armstrong J."/>
            <person name="Forsburg S.L."/>
            <person name="Cerutti L."/>
            <person name="Lowe T."/>
            <person name="McCombie W.R."/>
            <person name="Paulsen I."/>
            <person name="Potashkin J."/>
            <person name="Shpakovski G.V."/>
            <person name="Ussery D."/>
            <person name="Barrell B.G."/>
            <person name="Nurse P."/>
        </authorList>
    </citation>
    <scope>NUCLEOTIDE SEQUENCE [LARGE SCALE GENOMIC DNA]</scope>
    <source>
        <strain>972 / ATCC 24843</strain>
    </source>
</reference>
<reference key="2">
    <citation type="journal article" date="2006" name="Nat. Biotechnol.">
        <title>ORFeome cloning and global analysis of protein localization in the fission yeast Schizosaccharomyces pombe.</title>
        <authorList>
            <person name="Matsuyama A."/>
            <person name="Arai R."/>
            <person name="Yashiroda Y."/>
            <person name="Shirai A."/>
            <person name="Kamata A."/>
            <person name="Sekido S."/>
            <person name="Kobayashi Y."/>
            <person name="Hashimoto A."/>
            <person name="Hamamoto M."/>
            <person name="Hiraoka Y."/>
            <person name="Horinouchi S."/>
            <person name="Yoshida M."/>
        </authorList>
    </citation>
    <scope>SUBCELLULAR LOCATION [LARGE SCALE ANALYSIS]</scope>
</reference>
<accession>P87308</accession>
<sequence length="304" mass="34195">MGIFSETVPITAVTTYIDRLTSRDTDDEDLSGIVQLSEAVNLTVTGPREASRTLRKKLKYSTPHEQVRALVILQALIENAGSHFLQNFSDEKLEDRMLQCATNSEYSKPVRKRAIHMIKLWHNDYSNVRGMESMSSLVSRLPQRQSSASHSEQPTINLKKVGPILERLIASSSMAATNLSNSLVRINPNTENPAKNKQIMVYYVDCKRAHRSLLRYIQAIQDEMWLANLLKANDEIVTAIDAFKEKCSENSDYSSDSGSYSSSYSRHLDDRASYISRSSSGGSNAQRSEDLDVNNPFGDHNRLE</sequence>